<proteinExistence type="inferred from homology"/>
<evidence type="ECO:0000305" key="1"/>
<organism>
    <name type="scientific">Desulfitobacterium hafniense (strain DSM 10664 / DCB-2)</name>
    <dbReference type="NCBI Taxonomy" id="272564"/>
    <lineage>
        <taxon>Bacteria</taxon>
        <taxon>Bacillati</taxon>
        <taxon>Bacillota</taxon>
        <taxon>Clostridia</taxon>
        <taxon>Eubacteriales</taxon>
        <taxon>Desulfitobacteriaceae</taxon>
        <taxon>Desulfitobacterium</taxon>
    </lineage>
</organism>
<accession>B8G289</accession>
<reference key="1">
    <citation type="journal article" date="2012" name="BMC Microbiol.">
        <title>Genome sequence of Desulfitobacterium hafniense DCB-2, a Gram-positive anaerobe capable of dehalogenation and metal reduction.</title>
        <authorList>
            <person name="Kim S.H."/>
            <person name="Harzman C."/>
            <person name="Davis J.K."/>
            <person name="Hutcheson R."/>
            <person name="Broderick J.B."/>
            <person name="Marsh T.L."/>
            <person name="Tiedje J.M."/>
        </authorList>
    </citation>
    <scope>NUCLEOTIDE SEQUENCE [LARGE SCALE GENOMIC DNA]</scope>
    <source>
        <strain>DSM 10664 / DCB-2</strain>
    </source>
</reference>
<sequence>MRIAIVGGQNHNQETYGKLLGKTGRVEIHFYDGIPKKHNKRNLEKLIKDVDLVIVILGACSHASMWDTKKAAKKCHKEVLFSRGIGISSIVKQIAGKPAYTA</sequence>
<feature type="chain" id="PRO_0000383582" description="UPF0751 protein Dhaf_1351">
    <location>
        <begin position="1"/>
        <end position="102"/>
    </location>
</feature>
<name>Y1351_DESHD</name>
<protein>
    <recommendedName>
        <fullName>UPF0751 protein Dhaf_1351</fullName>
    </recommendedName>
</protein>
<gene>
    <name type="ordered locus">Dhaf_1351</name>
</gene>
<dbReference type="EMBL" id="CP001336">
    <property type="protein sequence ID" value="ACL19407.1"/>
    <property type="molecule type" value="Genomic_DNA"/>
</dbReference>
<dbReference type="RefSeq" id="WP_005817412.1">
    <property type="nucleotide sequence ID" value="NC_011830.1"/>
</dbReference>
<dbReference type="SMR" id="B8G289"/>
<dbReference type="KEGG" id="dhd:Dhaf_1351"/>
<dbReference type="HOGENOM" id="CLU_2286918_0_0_9"/>
<dbReference type="Proteomes" id="UP000007726">
    <property type="component" value="Chromosome"/>
</dbReference>
<dbReference type="InterPro" id="IPR016772">
    <property type="entry name" value="UCP020408"/>
</dbReference>
<dbReference type="Pfam" id="PF10087">
    <property type="entry name" value="DUF2325"/>
    <property type="match status" value="1"/>
</dbReference>
<comment type="similarity">
    <text evidence="1">Belongs to the UPF0751 family.</text>
</comment>